<name>HIS6_SINMW</name>
<reference key="1">
    <citation type="submission" date="2007-06" db="EMBL/GenBank/DDBJ databases">
        <title>Complete sequence of Sinorhizobium medicae WSM419 chromosome.</title>
        <authorList>
            <consortium name="US DOE Joint Genome Institute"/>
            <person name="Copeland A."/>
            <person name="Lucas S."/>
            <person name="Lapidus A."/>
            <person name="Barry K."/>
            <person name="Glavina del Rio T."/>
            <person name="Dalin E."/>
            <person name="Tice H."/>
            <person name="Pitluck S."/>
            <person name="Chain P."/>
            <person name="Malfatti S."/>
            <person name="Shin M."/>
            <person name="Vergez L."/>
            <person name="Schmutz J."/>
            <person name="Larimer F."/>
            <person name="Land M."/>
            <person name="Hauser L."/>
            <person name="Kyrpides N."/>
            <person name="Mikhailova N."/>
            <person name="Reeve W.G."/>
            <person name="Richardson P."/>
        </authorList>
    </citation>
    <scope>NUCLEOTIDE SEQUENCE [LARGE SCALE GENOMIC DNA]</scope>
    <source>
        <strain>WSM419</strain>
    </source>
</reference>
<proteinExistence type="inferred from homology"/>
<protein>
    <recommendedName>
        <fullName evidence="1">Imidazole glycerol phosphate synthase subunit HisF</fullName>
        <ecNumber evidence="1">4.3.2.10</ecNumber>
    </recommendedName>
    <alternativeName>
        <fullName evidence="1">IGP synthase cyclase subunit</fullName>
    </alternativeName>
    <alternativeName>
        <fullName evidence="1">IGP synthase subunit HisF</fullName>
    </alternativeName>
    <alternativeName>
        <fullName evidence="1">ImGP synthase subunit HisF</fullName>
        <shortName evidence="1">IGPS subunit HisF</shortName>
    </alternativeName>
</protein>
<organism>
    <name type="scientific">Sinorhizobium medicae (strain WSM419)</name>
    <name type="common">Ensifer medicae</name>
    <dbReference type="NCBI Taxonomy" id="366394"/>
    <lineage>
        <taxon>Bacteria</taxon>
        <taxon>Pseudomonadati</taxon>
        <taxon>Pseudomonadota</taxon>
        <taxon>Alphaproteobacteria</taxon>
        <taxon>Hyphomicrobiales</taxon>
        <taxon>Rhizobiaceae</taxon>
        <taxon>Sinorhizobium/Ensifer group</taxon>
        <taxon>Sinorhizobium</taxon>
    </lineage>
</organism>
<sequence>MTLKARVIPCLDVKDGRVVKGVNFVDLIDAGDPVEAARAYDAAGADELCFLDITASSDNRETIFDVIARTAEQCFMPLTVGGGVRQVSDIRKLLLAGADKVSINTAAVKNPDFVAEAADKFGDQCIVVAIDAKKVSDPGETDRWEIFTHGGRQPTGMDAVEFARKVVDLGAGEILLTSMDRDGTKSGYDISLTRTIADAVRAPVIASGGVGTLDHLVEGIRDGHATAVLAASIFHFGTYSIGEAKRHMAEHGVAMRLD</sequence>
<keyword id="KW-0028">Amino-acid biosynthesis</keyword>
<keyword id="KW-0963">Cytoplasm</keyword>
<keyword id="KW-0368">Histidine biosynthesis</keyword>
<keyword id="KW-0456">Lyase</keyword>
<feature type="chain" id="PRO_1000063154" description="Imidazole glycerol phosphate synthase subunit HisF">
    <location>
        <begin position="1"/>
        <end position="258"/>
    </location>
</feature>
<feature type="active site" evidence="1">
    <location>
        <position position="12"/>
    </location>
</feature>
<feature type="active site" evidence="1">
    <location>
        <position position="131"/>
    </location>
</feature>
<dbReference type="EC" id="4.3.2.10" evidence="1"/>
<dbReference type="EMBL" id="CP000738">
    <property type="protein sequence ID" value="ABR62083.1"/>
    <property type="molecule type" value="Genomic_DNA"/>
</dbReference>
<dbReference type="RefSeq" id="WP_012067464.1">
    <property type="nucleotide sequence ID" value="NC_009636.1"/>
</dbReference>
<dbReference type="RefSeq" id="YP_001328918.1">
    <property type="nucleotide sequence ID" value="NC_009636.1"/>
</dbReference>
<dbReference type="SMR" id="A6UEK3"/>
<dbReference type="STRING" id="366394.Smed_3259"/>
<dbReference type="GeneID" id="61610841"/>
<dbReference type="KEGG" id="smd:Smed_3259"/>
<dbReference type="PATRIC" id="fig|366394.8.peg.6499"/>
<dbReference type="eggNOG" id="COG0107">
    <property type="taxonomic scope" value="Bacteria"/>
</dbReference>
<dbReference type="HOGENOM" id="CLU_048577_4_0_5"/>
<dbReference type="OrthoDB" id="9781903at2"/>
<dbReference type="UniPathway" id="UPA00031">
    <property type="reaction ID" value="UER00010"/>
</dbReference>
<dbReference type="Proteomes" id="UP000001108">
    <property type="component" value="Chromosome"/>
</dbReference>
<dbReference type="GO" id="GO:0005737">
    <property type="term" value="C:cytoplasm"/>
    <property type="evidence" value="ECO:0007669"/>
    <property type="project" value="UniProtKB-SubCell"/>
</dbReference>
<dbReference type="GO" id="GO:0000107">
    <property type="term" value="F:imidazoleglycerol-phosphate synthase activity"/>
    <property type="evidence" value="ECO:0007669"/>
    <property type="project" value="UniProtKB-UniRule"/>
</dbReference>
<dbReference type="GO" id="GO:0016829">
    <property type="term" value="F:lyase activity"/>
    <property type="evidence" value="ECO:0007669"/>
    <property type="project" value="UniProtKB-KW"/>
</dbReference>
<dbReference type="GO" id="GO:0000105">
    <property type="term" value="P:L-histidine biosynthetic process"/>
    <property type="evidence" value="ECO:0007669"/>
    <property type="project" value="UniProtKB-UniRule"/>
</dbReference>
<dbReference type="CDD" id="cd04731">
    <property type="entry name" value="HisF"/>
    <property type="match status" value="1"/>
</dbReference>
<dbReference type="FunFam" id="3.20.20.70:FF:000006">
    <property type="entry name" value="Imidazole glycerol phosphate synthase subunit HisF"/>
    <property type="match status" value="1"/>
</dbReference>
<dbReference type="Gene3D" id="3.20.20.70">
    <property type="entry name" value="Aldolase class I"/>
    <property type="match status" value="1"/>
</dbReference>
<dbReference type="HAMAP" id="MF_01013">
    <property type="entry name" value="HisF"/>
    <property type="match status" value="1"/>
</dbReference>
<dbReference type="InterPro" id="IPR013785">
    <property type="entry name" value="Aldolase_TIM"/>
</dbReference>
<dbReference type="InterPro" id="IPR006062">
    <property type="entry name" value="His_biosynth"/>
</dbReference>
<dbReference type="InterPro" id="IPR004651">
    <property type="entry name" value="HisF"/>
</dbReference>
<dbReference type="InterPro" id="IPR050064">
    <property type="entry name" value="IGPS_HisA/HisF"/>
</dbReference>
<dbReference type="InterPro" id="IPR011060">
    <property type="entry name" value="RibuloseP-bd_barrel"/>
</dbReference>
<dbReference type="NCBIfam" id="TIGR00735">
    <property type="entry name" value="hisF"/>
    <property type="match status" value="1"/>
</dbReference>
<dbReference type="PANTHER" id="PTHR21235:SF2">
    <property type="entry name" value="IMIDAZOLE GLYCEROL PHOSPHATE SYNTHASE HISHF"/>
    <property type="match status" value="1"/>
</dbReference>
<dbReference type="PANTHER" id="PTHR21235">
    <property type="entry name" value="IMIDAZOLE GLYCEROL PHOSPHATE SYNTHASE SUBUNIT HISF/H IGP SYNTHASE SUBUNIT HISF/H"/>
    <property type="match status" value="1"/>
</dbReference>
<dbReference type="Pfam" id="PF00977">
    <property type="entry name" value="His_biosynth"/>
    <property type="match status" value="1"/>
</dbReference>
<dbReference type="SUPFAM" id="SSF51366">
    <property type="entry name" value="Ribulose-phoshate binding barrel"/>
    <property type="match status" value="1"/>
</dbReference>
<gene>
    <name evidence="1" type="primary">hisF</name>
    <name type="ordered locus">Smed_3259</name>
</gene>
<accession>A6UEK3</accession>
<comment type="function">
    <text evidence="1">IGPS catalyzes the conversion of PRFAR and glutamine to IGP, AICAR and glutamate. The HisF subunit catalyzes the cyclization activity that produces IGP and AICAR from PRFAR using the ammonia provided by the HisH subunit.</text>
</comment>
<comment type="catalytic activity">
    <reaction evidence="1">
        <text>5-[(5-phospho-1-deoxy-D-ribulos-1-ylimino)methylamino]-1-(5-phospho-beta-D-ribosyl)imidazole-4-carboxamide + L-glutamine = D-erythro-1-(imidazol-4-yl)glycerol 3-phosphate + 5-amino-1-(5-phospho-beta-D-ribosyl)imidazole-4-carboxamide + L-glutamate + H(+)</text>
        <dbReference type="Rhea" id="RHEA:24793"/>
        <dbReference type="ChEBI" id="CHEBI:15378"/>
        <dbReference type="ChEBI" id="CHEBI:29985"/>
        <dbReference type="ChEBI" id="CHEBI:58278"/>
        <dbReference type="ChEBI" id="CHEBI:58359"/>
        <dbReference type="ChEBI" id="CHEBI:58475"/>
        <dbReference type="ChEBI" id="CHEBI:58525"/>
        <dbReference type="EC" id="4.3.2.10"/>
    </reaction>
</comment>
<comment type="pathway">
    <text evidence="1">Amino-acid biosynthesis; L-histidine biosynthesis; L-histidine from 5-phospho-alpha-D-ribose 1-diphosphate: step 5/9.</text>
</comment>
<comment type="subunit">
    <text evidence="1">Heterodimer of HisH and HisF.</text>
</comment>
<comment type="subcellular location">
    <subcellularLocation>
        <location evidence="1">Cytoplasm</location>
    </subcellularLocation>
</comment>
<comment type="similarity">
    <text evidence="1">Belongs to the HisA/HisF family.</text>
</comment>
<evidence type="ECO:0000255" key="1">
    <source>
        <dbReference type="HAMAP-Rule" id="MF_01013"/>
    </source>
</evidence>